<accession>A1S235</accession>
<comment type="function">
    <text evidence="1">With S4 and S12 plays an important role in translational accuracy.</text>
</comment>
<comment type="function">
    <text evidence="1">Located at the back of the 30S subunit body where it stabilizes the conformation of the head with respect to the body.</text>
</comment>
<comment type="subunit">
    <text evidence="1">Part of the 30S ribosomal subunit. Contacts proteins S4 and S8.</text>
</comment>
<comment type="domain">
    <text>The N-terminal domain interacts with the head of the 30S subunit; the C-terminal domain interacts with the body and contacts protein S4. The interaction surface between S4 and S5 is involved in control of translational fidelity.</text>
</comment>
<comment type="similarity">
    <text evidence="1">Belongs to the universal ribosomal protein uS5 family.</text>
</comment>
<reference key="1">
    <citation type="submission" date="2006-12" db="EMBL/GenBank/DDBJ databases">
        <title>Complete sequence of Shewanella amazonensis SB2B.</title>
        <authorList>
            <consortium name="US DOE Joint Genome Institute"/>
            <person name="Copeland A."/>
            <person name="Lucas S."/>
            <person name="Lapidus A."/>
            <person name="Barry K."/>
            <person name="Detter J.C."/>
            <person name="Glavina del Rio T."/>
            <person name="Hammon N."/>
            <person name="Israni S."/>
            <person name="Dalin E."/>
            <person name="Tice H."/>
            <person name="Pitluck S."/>
            <person name="Munk A.C."/>
            <person name="Brettin T."/>
            <person name="Bruce D."/>
            <person name="Han C."/>
            <person name="Tapia R."/>
            <person name="Gilna P."/>
            <person name="Schmutz J."/>
            <person name="Larimer F."/>
            <person name="Land M."/>
            <person name="Hauser L."/>
            <person name="Kyrpides N."/>
            <person name="Mikhailova N."/>
            <person name="Fredrickson J."/>
            <person name="Richardson P."/>
        </authorList>
    </citation>
    <scope>NUCLEOTIDE SEQUENCE [LARGE SCALE GENOMIC DNA]</scope>
    <source>
        <strain>ATCC BAA-1098 / SB2B</strain>
    </source>
</reference>
<gene>
    <name evidence="1" type="primary">rpsE</name>
    <name type="ordered locus">Sama_0230</name>
</gene>
<protein>
    <recommendedName>
        <fullName evidence="1">Small ribosomal subunit protein uS5</fullName>
    </recommendedName>
    <alternativeName>
        <fullName evidence="2">30S ribosomal protein S5</fullName>
    </alternativeName>
</protein>
<sequence>MAKVEAQQQKDDLQEKLIAVNRVSKVVKGGRIFSFTALTVVGDGNGRVGYGYGKAREVPAAIQKAMEKARRNMVTVELNEGTLHHPVKGRHTGSRVYMQPASQGTGIIAGGAMRAVLEVAGVHNVLSKAYGSTNPINIVRATVDALTHMKSPAQVAAKRGLSVEEIRG</sequence>
<evidence type="ECO:0000255" key="1">
    <source>
        <dbReference type="HAMAP-Rule" id="MF_01307"/>
    </source>
</evidence>
<evidence type="ECO:0000305" key="2"/>
<feature type="chain" id="PRO_0000323192" description="Small ribosomal subunit protein uS5">
    <location>
        <begin position="1"/>
        <end position="168"/>
    </location>
</feature>
<feature type="domain" description="S5 DRBM" evidence="1">
    <location>
        <begin position="13"/>
        <end position="76"/>
    </location>
</feature>
<dbReference type="EMBL" id="CP000507">
    <property type="protein sequence ID" value="ABL98441.1"/>
    <property type="molecule type" value="Genomic_DNA"/>
</dbReference>
<dbReference type="RefSeq" id="WP_011758351.1">
    <property type="nucleotide sequence ID" value="NC_008700.1"/>
</dbReference>
<dbReference type="SMR" id="A1S235"/>
<dbReference type="STRING" id="326297.Sama_0230"/>
<dbReference type="KEGG" id="saz:Sama_0230"/>
<dbReference type="eggNOG" id="COG0098">
    <property type="taxonomic scope" value="Bacteria"/>
</dbReference>
<dbReference type="HOGENOM" id="CLU_065898_2_2_6"/>
<dbReference type="OrthoDB" id="9809045at2"/>
<dbReference type="Proteomes" id="UP000009175">
    <property type="component" value="Chromosome"/>
</dbReference>
<dbReference type="GO" id="GO:0015935">
    <property type="term" value="C:small ribosomal subunit"/>
    <property type="evidence" value="ECO:0007669"/>
    <property type="project" value="InterPro"/>
</dbReference>
<dbReference type="GO" id="GO:0019843">
    <property type="term" value="F:rRNA binding"/>
    <property type="evidence" value="ECO:0007669"/>
    <property type="project" value="UniProtKB-UniRule"/>
</dbReference>
<dbReference type="GO" id="GO:0003735">
    <property type="term" value="F:structural constituent of ribosome"/>
    <property type="evidence" value="ECO:0007669"/>
    <property type="project" value="InterPro"/>
</dbReference>
<dbReference type="GO" id="GO:0006412">
    <property type="term" value="P:translation"/>
    <property type="evidence" value="ECO:0007669"/>
    <property type="project" value="UniProtKB-UniRule"/>
</dbReference>
<dbReference type="FunFam" id="3.30.160.20:FF:000001">
    <property type="entry name" value="30S ribosomal protein S5"/>
    <property type="match status" value="1"/>
</dbReference>
<dbReference type="FunFam" id="3.30.230.10:FF:000002">
    <property type="entry name" value="30S ribosomal protein S5"/>
    <property type="match status" value="1"/>
</dbReference>
<dbReference type="Gene3D" id="3.30.160.20">
    <property type="match status" value="1"/>
</dbReference>
<dbReference type="Gene3D" id="3.30.230.10">
    <property type="match status" value="1"/>
</dbReference>
<dbReference type="HAMAP" id="MF_01307_B">
    <property type="entry name" value="Ribosomal_uS5_B"/>
    <property type="match status" value="1"/>
</dbReference>
<dbReference type="InterPro" id="IPR020568">
    <property type="entry name" value="Ribosomal_Su5_D2-typ_SF"/>
</dbReference>
<dbReference type="InterPro" id="IPR000851">
    <property type="entry name" value="Ribosomal_uS5"/>
</dbReference>
<dbReference type="InterPro" id="IPR005712">
    <property type="entry name" value="Ribosomal_uS5_bac-type"/>
</dbReference>
<dbReference type="InterPro" id="IPR005324">
    <property type="entry name" value="Ribosomal_uS5_C"/>
</dbReference>
<dbReference type="InterPro" id="IPR013810">
    <property type="entry name" value="Ribosomal_uS5_N"/>
</dbReference>
<dbReference type="InterPro" id="IPR018192">
    <property type="entry name" value="Ribosomal_uS5_N_CS"/>
</dbReference>
<dbReference type="InterPro" id="IPR014721">
    <property type="entry name" value="Ribsml_uS5_D2-typ_fold_subgr"/>
</dbReference>
<dbReference type="NCBIfam" id="TIGR01021">
    <property type="entry name" value="rpsE_bact"/>
    <property type="match status" value="1"/>
</dbReference>
<dbReference type="PANTHER" id="PTHR48277">
    <property type="entry name" value="MITOCHONDRIAL RIBOSOMAL PROTEIN S5"/>
    <property type="match status" value="1"/>
</dbReference>
<dbReference type="PANTHER" id="PTHR48277:SF1">
    <property type="entry name" value="MITOCHONDRIAL RIBOSOMAL PROTEIN S5"/>
    <property type="match status" value="1"/>
</dbReference>
<dbReference type="Pfam" id="PF00333">
    <property type="entry name" value="Ribosomal_S5"/>
    <property type="match status" value="1"/>
</dbReference>
<dbReference type="Pfam" id="PF03719">
    <property type="entry name" value="Ribosomal_S5_C"/>
    <property type="match status" value="1"/>
</dbReference>
<dbReference type="SUPFAM" id="SSF54768">
    <property type="entry name" value="dsRNA-binding domain-like"/>
    <property type="match status" value="1"/>
</dbReference>
<dbReference type="SUPFAM" id="SSF54211">
    <property type="entry name" value="Ribosomal protein S5 domain 2-like"/>
    <property type="match status" value="1"/>
</dbReference>
<dbReference type="PROSITE" id="PS00585">
    <property type="entry name" value="RIBOSOMAL_S5"/>
    <property type="match status" value="1"/>
</dbReference>
<dbReference type="PROSITE" id="PS50881">
    <property type="entry name" value="S5_DSRBD"/>
    <property type="match status" value="1"/>
</dbReference>
<proteinExistence type="inferred from homology"/>
<organism>
    <name type="scientific">Shewanella amazonensis (strain ATCC BAA-1098 / SB2B)</name>
    <dbReference type="NCBI Taxonomy" id="326297"/>
    <lineage>
        <taxon>Bacteria</taxon>
        <taxon>Pseudomonadati</taxon>
        <taxon>Pseudomonadota</taxon>
        <taxon>Gammaproteobacteria</taxon>
        <taxon>Alteromonadales</taxon>
        <taxon>Shewanellaceae</taxon>
        <taxon>Shewanella</taxon>
    </lineage>
</organism>
<name>RS5_SHEAM</name>
<keyword id="KW-1185">Reference proteome</keyword>
<keyword id="KW-0687">Ribonucleoprotein</keyword>
<keyword id="KW-0689">Ribosomal protein</keyword>
<keyword id="KW-0694">RNA-binding</keyword>
<keyword id="KW-0699">rRNA-binding</keyword>